<dbReference type="EC" id="3.1.4.4" evidence="1"/>
<dbReference type="EMBL" id="AC008016">
    <property type="protein sequence ID" value="AAD55607.1"/>
    <property type="molecule type" value="Genomic_DNA"/>
</dbReference>
<dbReference type="EMBL" id="CP002684">
    <property type="protein sequence ID" value="AEE32825.1"/>
    <property type="molecule type" value="Genomic_DNA"/>
</dbReference>
<dbReference type="EMBL" id="CP002684">
    <property type="protein sequence ID" value="ANM60648.1"/>
    <property type="molecule type" value="Genomic_DNA"/>
</dbReference>
<dbReference type="EMBL" id="CP002684">
    <property type="protein sequence ID" value="ANM60649.1"/>
    <property type="molecule type" value="Genomic_DNA"/>
</dbReference>
<dbReference type="PIR" id="D96566">
    <property type="entry name" value="D96566"/>
</dbReference>
<dbReference type="RefSeq" id="NP_001322920.1">
    <property type="nucleotide sequence ID" value="NM_001333554.1"/>
</dbReference>
<dbReference type="RefSeq" id="NP_001322921.1">
    <property type="nucleotide sequence ID" value="NM_001333553.1"/>
</dbReference>
<dbReference type="RefSeq" id="NP_175666.1">
    <property type="nucleotide sequence ID" value="NM_104135.3"/>
</dbReference>
<dbReference type="SMR" id="Q9SSQ9"/>
<dbReference type="BioGRID" id="26914">
    <property type="interactions" value="1"/>
</dbReference>
<dbReference type="FunCoup" id="Q9SSQ9">
    <property type="interactions" value="168"/>
</dbReference>
<dbReference type="STRING" id="3702.Q9SSQ9"/>
<dbReference type="iPTMnet" id="Q9SSQ9"/>
<dbReference type="PaxDb" id="3702-AT1G52570.1"/>
<dbReference type="ProteomicsDB" id="235040"/>
<dbReference type="EnsemblPlants" id="AT1G52570.1">
    <property type="protein sequence ID" value="AT1G52570.1"/>
    <property type="gene ID" value="AT1G52570"/>
</dbReference>
<dbReference type="EnsemblPlants" id="AT1G52570.2">
    <property type="protein sequence ID" value="AT1G52570.2"/>
    <property type="gene ID" value="AT1G52570"/>
</dbReference>
<dbReference type="EnsemblPlants" id="AT1G52570.3">
    <property type="protein sequence ID" value="AT1G52570.3"/>
    <property type="gene ID" value="AT1G52570"/>
</dbReference>
<dbReference type="GeneID" id="841689"/>
<dbReference type="Gramene" id="AT1G52570.1">
    <property type="protein sequence ID" value="AT1G52570.1"/>
    <property type="gene ID" value="AT1G52570"/>
</dbReference>
<dbReference type="Gramene" id="AT1G52570.2">
    <property type="protein sequence ID" value="AT1G52570.2"/>
    <property type="gene ID" value="AT1G52570"/>
</dbReference>
<dbReference type="Gramene" id="AT1G52570.3">
    <property type="protein sequence ID" value="AT1G52570.3"/>
    <property type="gene ID" value="AT1G52570"/>
</dbReference>
<dbReference type="KEGG" id="ath:AT1G52570"/>
<dbReference type="Araport" id="AT1G52570"/>
<dbReference type="TAIR" id="AT1G52570">
    <property type="gene designation" value="PLDALPHA2"/>
</dbReference>
<dbReference type="eggNOG" id="KOG1329">
    <property type="taxonomic scope" value="Eukaryota"/>
</dbReference>
<dbReference type="HOGENOM" id="CLU_004684_0_0_1"/>
<dbReference type="InParanoid" id="Q9SSQ9"/>
<dbReference type="OMA" id="GERFKVY"/>
<dbReference type="PhylomeDB" id="Q9SSQ9"/>
<dbReference type="BioCyc" id="ARA:AT1G52570-MONOMER"/>
<dbReference type="CD-CODE" id="4299E36E">
    <property type="entry name" value="Nucleolus"/>
</dbReference>
<dbReference type="PRO" id="PR:Q9SSQ9"/>
<dbReference type="Proteomes" id="UP000006548">
    <property type="component" value="Chromosome 1"/>
</dbReference>
<dbReference type="ExpressionAtlas" id="Q9SSQ9">
    <property type="expression patterns" value="baseline and differential"/>
</dbReference>
<dbReference type="GO" id="GO:0009941">
    <property type="term" value="C:chloroplast envelope"/>
    <property type="evidence" value="ECO:0007005"/>
    <property type="project" value="TAIR"/>
</dbReference>
<dbReference type="GO" id="GO:0030136">
    <property type="term" value="C:clathrin-coated vesicle"/>
    <property type="evidence" value="ECO:0007669"/>
    <property type="project" value="UniProtKB-SubCell"/>
</dbReference>
<dbReference type="GO" id="GO:0005829">
    <property type="term" value="C:cytosol"/>
    <property type="evidence" value="ECO:0007005"/>
    <property type="project" value="TAIR"/>
</dbReference>
<dbReference type="GO" id="GO:0016020">
    <property type="term" value="C:membrane"/>
    <property type="evidence" value="ECO:0007669"/>
    <property type="project" value="UniProtKB-SubCell"/>
</dbReference>
<dbReference type="GO" id="GO:0005634">
    <property type="term" value="C:nucleus"/>
    <property type="evidence" value="ECO:0007005"/>
    <property type="project" value="TAIR"/>
</dbReference>
<dbReference type="GO" id="GO:0005773">
    <property type="term" value="C:vacuole"/>
    <property type="evidence" value="ECO:0007669"/>
    <property type="project" value="UniProtKB-SubCell"/>
</dbReference>
<dbReference type="GO" id="GO:0005509">
    <property type="term" value="F:calcium ion binding"/>
    <property type="evidence" value="ECO:0007669"/>
    <property type="project" value="InterPro"/>
</dbReference>
<dbReference type="GO" id="GO:0004630">
    <property type="term" value="F:phospholipase D activity"/>
    <property type="evidence" value="ECO:0007669"/>
    <property type="project" value="UniProtKB-EC"/>
</dbReference>
<dbReference type="GO" id="GO:0009738">
    <property type="term" value="P:abscisic acid-activated signaling pathway"/>
    <property type="evidence" value="ECO:0007669"/>
    <property type="project" value="UniProtKB-KW"/>
</dbReference>
<dbReference type="GO" id="GO:0009873">
    <property type="term" value="P:ethylene-activated signaling pathway"/>
    <property type="evidence" value="ECO:0007669"/>
    <property type="project" value="UniProtKB-KW"/>
</dbReference>
<dbReference type="GO" id="GO:0016042">
    <property type="term" value="P:lipid catabolic process"/>
    <property type="evidence" value="ECO:0007669"/>
    <property type="project" value="UniProtKB-KW"/>
</dbReference>
<dbReference type="GO" id="GO:0046470">
    <property type="term" value="P:phosphatidylcholine metabolic process"/>
    <property type="evidence" value="ECO:0007669"/>
    <property type="project" value="InterPro"/>
</dbReference>
<dbReference type="CDD" id="cd04015">
    <property type="entry name" value="C2_plant_PLD"/>
    <property type="match status" value="1"/>
</dbReference>
<dbReference type="CDD" id="cd09199">
    <property type="entry name" value="PLDc_pPLDalpha_2"/>
    <property type="match status" value="1"/>
</dbReference>
<dbReference type="FunFam" id="3.30.870.10:FF:000027">
    <property type="entry name" value="Phospholipase D"/>
    <property type="match status" value="1"/>
</dbReference>
<dbReference type="FunFam" id="2.60.40.150:FF:000266">
    <property type="entry name" value="Phospholipase D alpha 1"/>
    <property type="match status" value="1"/>
</dbReference>
<dbReference type="FunFam" id="3.30.870.10:FF:000025">
    <property type="entry name" value="Phospholipase D delta"/>
    <property type="match status" value="1"/>
</dbReference>
<dbReference type="Gene3D" id="2.60.40.150">
    <property type="entry name" value="C2 domain"/>
    <property type="match status" value="1"/>
</dbReference>
<dbReference type="Gene3D" id="3.30.870.10">
    <property type="entry name" value="Endonuclease Chain A"/>
    <property type="match status" value="2"/>
</dbReference>
<dbReference type="InterPro" id="IPR000008">
    <property type="entry name" value="C2_dom"/>
</dbReference>
<dbReference type="InterPro" id="IPR035892">
    <property type="entry name" value="C2_domain_sf"/>
</dbReference>
<dbReference type="InterPro" id="IPR001736">
    <property type="entry name" value="PLipase_D/transphosphatidylase"/>
</dbReference>
<dbReference type="InterPro" id="IPR024632">
    <property type="entry name" value="PLipase_D_C"/>
</dbReference>
<dbReference type="InterPro" id="IPR015679">
    <property type="entry name" value="PLipase_D_fam"/>
</dbReference>
<dbReference type="InterPro" id="IPR011402">
    <property type="entry name" value="PLipase_D_pln"/>
</dbReference>
<dbReference type="PANTHER" id="PTHR18896">
    <property type="entry name" value="PHOSPHOLIPASE D"/>
    <property type="match status" value="1"/>
</dbReference>
<dbReference type="PANTHER" id="PTHR18896:SF177">
    <property type="entry name" value="PHOSPHOLIPASE D ALPHA 2"/>
    <property type="match status" value="1"/>
</dbReference>
<dbReference type="Pfam" id="PF00168">
    <property type="entry name" value="C2"/>
    <property type="match status" value="1"/>
</dbReference>
<dbReference type="Pfam" id="PF12357">
    <property type="entry name" value="PLD_C"/>
    <property type="match status" value="1"/>
</dbReference>
<dbReference type="Pfam" id="PF00614">
    <property type="entry name" value="PLDc"/>
    <property type="match status" value="2"/>
</dbReference>
<dbReference type="PIRSF" id="PIRSF036470">
    <property type="entry name" value="PLD_plant"/>
    <property type="match status" value="1"/>
</dbReference>
<dbReference type="SMART" id="SM00239">
    <property type="entry name" value="C2"/>
    <property type="match status" value="1"/>
</dbReference>
<dbReference type="SMART" id="SM00155">
    <property type="entry name" value="PLDc"/>
    <property type="match status" value="2"/>
</dbReference>
<dbReference type="SUPFAM" id="SSF49562">
    <property type="entry name" value="C2 domain (Calcium/lipid-binding domain, CaLB)"/>
    <property type="match status" value="1"/>
</dbReference>
<dbReference type="SUPFAM" id="SSF56024">
    <property type="entry name" value="Phospholipase D/nuclease"/>
    <property type="match status" value="2"/>
</dbReference>
<dbReference type="PROSITE" id="PS50004">
    <property type="entry name" value="C2"/>
    <property type="match status" value="1"/>
</dbReference>
<dbReference type="PROSITE" id="PS50035">
    <property type="entry name" value="PLD"/>
    <property type="match status" value="2"/>
</dbReference>
<sequence length="810" mass="91598">MEECLLHGRLHATIYEVDHLHAEGGRSGFLGSILANVEETIGVGKGETQLYATIDLEKARVGRTRKITKEPKNPKWFESFHIYCGHMAKHVIFTVKDANPIGATLIGRGYIPVEDILHGEEVDRWVDILDNEKNPIAGGSKIHVKLQYFGVEKDKNWNRGIKSAKFPGVPYTFFSQRRGCKVSLYQDAHIPGNFVPKIPLAGGKNYEPHRCWEDIFDAITNAKHLIYITGWSVYTEISLVRDSRRPKQGGDVTVGELLKKKASEGVKVILLVWDDRTSVDLLKKDGLMATHDEETENFFRGTDVNCILCPRNPDDGGSIVQNLQISTMFTHHQKIVVVDSEMPSGGSRSRRIVSFVGGLDLCDGRYDTPFHSLFRTLDTAHHDDFHQPNFTGAAITKGGPREPWHDIHCRLEGPIAWDVLYNFEQRWSRQGGKDILVKMRELGDIIIPPSPVLFSEDHDVWNVQLFRSIDGGAAAGFPDSPEAAAEAGLVSGKDNIIDRSIQDAYIHAIRRAKDFIYIENQYFLGSSFAWSADGIKPEEINALHLIPKELSLKIVSKIKAGEKFKVYVVVPMWPEGIPESGSVQAILDWQKRTMEMMYKDVIKALRENGLEGEDPRDYLTFFCLGNREVKKDGEYEPSEKPEPDTDYIRAQEARRFMIYVHTKMMIVDDEYIIIGSANINQRSMDGARDSEIAMGGYQPYHLSTRQPARGQIHGFRMSLWYEHLGMLDETFLDPSSQECIQKVNRVADKYWDLYSSESLEHDLPGHLLRYPIGIASEGNITELPGCEFFPDTKARILGVKSDYMPPILTT</sequence>
<protein>
    <recommendedName>
        <fullName evidence="5">Phospholipase D alpha 2</fullName>
        <shortName evidence="5">AtPLDalpha2</shortName>
        <shortName evidence="5">PLD alpha 2</shortName>
        <ecNumber evidence="1">3.1.4.4</ecNumber>
    </recommendedName>
    <alternativeName>
        <fullName>Choline phosphatase 2</fullName>
    </alternativeName>
    <alternativeName>
        <fullName>Phosphatidylcholine-hydrolyzing phospholipase D 2</fullName>
    </alternativeName>
</protein>
<proteinExistence type="evidence at transcript level"/>
<accession>Q9SSQ9</accession>
<organism>
    <name type="scientific">Arabidopsis thaliana</name>
    <name type="common">Mouse-ear cress</name>
    <dbReference type="NCBI Taxonomy" id="3702"/>
    <lineage>
        <taxon>Eukaryota</taxon>
        <taxon>Viridiplantae</taxon>
        <taxon>Streptophyta</taxon>
        <taxon>Embryophyta</taxon>
        <taxon>Tracheophyta</taxon>
        <taxon>Spermatophyta</taxon>
        <taxon>Magnoliopsida</taxon>
        <taxon>eudicotyledons</taxon>
        <taxon>Gunneridae</taxon>
        <taxon>Pentapetalae</taxon>
        <taxon>rosids</taxon>
        <taxon>malvids</taxon>
        <taxon>Brassicales</taxon>
        <taxon>Brassicaceae</taxon>
        <taxon>Camelineae</taxon>
        <taxon>Arabidopsis</taxon>
    </lineage>
</organism>
<keyword id="KW-0938">Abscisic acid signaling pathway</keyword>
<keyword id="KW-0106">Calcium</keyword>
<keyword id="KW-0963">Cytoplasm</keyword>
<keyword id="KW-0968">Cytoplasmic vesicle</keyword>
<keyword id="KW-0936">Ethylene signaling pathway</keyword>
<keyword id="KW-0378">Hydrolase</keyword>
<keyword id="KW-0442">Lipid degradation</keyword>
<keyword id="KW-0443">Lipid metabolism</keyword>
<keyword id="KW-0472">Membrane</keyword>
<keyword id="KW-0479">Metal-binding</keyword>
<keyword id="KW-1185">Reference proteome</keyword>
<keyword id="KW-0677">Repeat</keyword>
<keyword id="KW-0926">Vacuole</keyword>
<reference key="1">
    <citation type="journal article" date="2000" name="Nature">
        <title>Sequence and analysis of chromosome 1 of the plant Arabidopsis thaliana.</title>
        <authorList>
            <person name="Theologis A."/>
            <person name="Ecker J.R."/>
            <person name="Palm C.J."/>
            <person name="Federspiel N.A."/>
            <person name="Kaul S."/>
            <person name="White O."/>
            <person name="Alonso J."/>
            <person name="Altafi H."/>
            <person name="Araujo R."/>
            <person name="Bowman C.L."/>
            <person name="Brooks S.Y."/>
            <person name="Buehler E."/>
            <person name="Chan A."/>
            <person name="Chao Q."/>
            <person name="Chen H."/>
            <person name="Cheuk R.F."/>
            <person name="Chin C.W."/>
            <person name="Chung M.K."/>
            <person name="Conn L."/>
            <person name="Conway A.B."/>
            <person name="Conway A.R."/>
            <person name="Creasy T.H."/>
            <person name="Dewar K."/>
            <person name="Dunn P."/>
            <person name="Etgu P."/>
            <person name="Feldblyum T.V."/>
            <person name="Feng J.-D."/>
            <person name="Fong B."/>
            <person name="Fujii C.Y."/>
            <person name="Gill J.E."/>
            <person name="Goldsmith A.D."/>
            <person name="Haas B."/>
            <person name="Hansen N.F."/>
            <person name="Hughes B."/>
            <person name="Huizar L."/>
            <person name="Hunter J.L."/>
            <person name="Jenkins J."/>
            <person name="Johnson-Hopson C."/>
            <person name="Khan S."/>
            <person name="Khaykin E."/>
            <person name="Kim C.J."/>
            <person name="Koo H.L."/>
            <person name="Kremenetskaia I."/>
            <person name="Kurtz D.B."/>
            <person name="Kwan A."/>
            <person name="Lam B."/>
            <person name="Langin-Hooper S."/>
            <person name="Lee A."/>
            <person name="Lee J.M."/>
            <person name="Lenz C.A."/>
            <person name="Li J.H."/>
            <person name="Li Y.-P."/>
            <person name="Lin X."/>
            <person name="Liu S.X."/>
            <person name="Liu Z.A."/>
            <person name="Luros J.S."/>
            <person name="Maiti R."/>
            <person name="Marziali A."/>
            <person name="Militscher J."/>
            <person name="Miranda M."/>
            <person name="Nguyen M."/>
            <person name="Nierman W.C."/>
            <person name="Osborne B.I."/>
            <person name="Pai G."/>
            <person name="Peterson J."/>
            <person name="Pham P.K."/>
            <person name="Rizzo M."/>
            <person name="Rooney T."/>
            <person name="Rowley D."/>
            <person name="Sakano H."/>
            <person name="Salzberg S.L."/>
            <person name="Schwartz J.R."/>
            <person name="Shinn P."/>
            <person name="Southwick A.M."/>
            <person name="Sun H."/>
            <person name="Tallon L.J."/>
            <person name="Tambunga G."/>
            <person name="Toriumi M.J."/>
            <person name="Town C.D."/>
            <person name="Utterback T."/>
            <person name="Van Aken S."/>
            <person name="Vaysberg M."/>
            <person name="Vysotskaia V.S."/>
            <person name="Walker M."/>
            <person name="Wu D."/>
            <person name="Yu G."/>
            <person name="Fraser C.M."/>
            <person name="Venter J.C."/>
            <person name="Davis R.W."/>
        </authorList>
    </citation>
    <scope>NUCLEOTIDE SEQUENCE [LARGE SCALE GENOMIC DNA]</scope>
    <source>
        <strain>cv. Columbia</strain>
    </source>
</reference>
<reference key="2">
    <citation type="journal article" date="2017" name="Plant J.">
        <title>Araport11: a complete reannotation of the Arabidopsis thaliana reference genome.</title>
        <authorList>
            <person name="Cheng C.Y."/>
            <person name="Krishnakumar V."/>
            <person name="Chan A.P."/>
            <person name="Thibaud-Nissen F."/>
            <person name="Schobel S."/>
            <person name="Town C.D."/>
        </authorList>
    </citation>
    <scope>GENOME REANNOTATION</scope>
    <source>
        <strain>cv. Columbia</strain>
    </source>
</reference>
<reference key="3">
    <citation type="journal article" date="1999" name="Plant Physiol.">
        <title>Subcellular distribution and tissue expression of phospholipase Dalpha, Dbeta, and Dgamma in Arabidopsis.</title>
        <authorList>
            <person name="Fan L."/>
            <person name="Zheng S."/>
            <person name="Cui D."/>
            <person name="Wang X."/>
        </authorList>
    </citation>
    <scope>SUBCELLULAR LOCATION</scope>
    <scope>TISSUE SPECIFICITY</scope>
</reference>
<reference key="4">
    <citation type="journal article" date="2002" name="Plant Physiol.">
        <title>The Arabidopsis phospholipase D family. Characterization of a calcium-independent and phosphatidylcholine-selective PLD zeta 1 with distinct regulatory domains.</title>
        <authorList>
            <person name="Qin C."/>
            <person name="Wang X."/>
        </authorList>
    </citation>
    <scope>GENE FAMILY</scope>
    <scope>NOMENCLATURE</scope>
</reference>
<feature type="chain" id="PRO_0000218809" description="Phospholipase D alpha 2">
    <location>
        <begin position="1"/>
        <end position="810"/>
    </location>
</feature>
<feature type="domain" description="C2" evidence="2">
    <location>
        <begin position="1"/>
        <end position="126"/>
    </location>
</feature>
<feature type="domain" description="PLD phosphodiesterase 1" evidence="3">
    <location>
        <begin position="327"/>
        <end position="365"/>
    </location>
</feature>
<feature type="domain" description="PLD phosphodiesterase 2" evidence="3">
    <location>
        <begin position="656"/>
        <end position="683"/>
    </location>
</feature>
<feature type="active site" evidence="3">
    <location>
        <position position="332"/>
    </location>
</feature>
<feature type="active site" evidence="3">
    <location>
        <position position="334"/>
    </location>
</feature>
<feature type="active site" evidence="3">
    <location>
        <position position="339"/>
    </location>
</feature>
<feature type="active site" evidence="3">
    <location>
        <position position="661"/>
    </location>
</feature>
<feature type="active site" evidence="3">
    <location>
        <position position="663"/>
    </location>
</feature>
<feature type="active site" evidence="3">
    <location>
        <position position="668"/>
    </location>
</feature>
<feature type="binding site" evidence="1">
    <location>
        <position position="187"/>
    </location>
    <ligand>
        <name>Ca(2+)</name>
        <dbReference type="ChEBI" id="CHEBI:29108"/>
    </ligand>
</feature>
<feature type="binding site" evidence="1">
    <location>
        <position position="332"/>
    </location>
    <ligand>
        <name>a 1,2-diacyl-sn-glycero-3-phosphate</name>
        <dbReference type="ChEBI" id="CHEBI:58608"/>
    </ligand>
</feature>
<feature type="binding site" evidence="1">
    <location>
        <position position="371"/>
    </location>
    <ligand>
        <name>Ca(2+)</name>
        <dbReference type="ChEBI" id="CHEBI:29108"/>
    </ligand>
</feature>
<feature type="binding site" evidence="1">
    <location>
        <position position="405"/>
    </location>
    <ligand>
        <name>Ca(2+)</name>
        <dbReference type="ChEBI" id="CHEBI:29108"/>
    </ligand>
</feature>
<feature type="binding site" evidence="1">
    <location>
        <position position="521"/>
    </location>
    <ligand>
        <name>a 1,2-diacyl-sn-glycero-3-phosphate</name>
        <dbReference type="ChEBI" id="CHEBI:58608"/>
    </ligand>
</feature>
<feature type="binding site" evidence="1">
    <location>
        <position position="661"/>
    </location>
    <ligand>
        <name>a 1,2-diacyl-sn-glycero-3-phosphate</name>
        <dbReference type="ChEBI" id="CHEBI:58608"/>
    </ligand>
</feature>
<feature type="binding site" evidence="1">
    <location>
        <position position="722"/>
    </location>
    <ligand>
        <name>Ca(2+)</name>
        <dbReference type="ChEBI" id="CHEBI:29108"/>
    </ligand>
</feature>
<gene>
    <name evidence="5" type="primary">PLDALPHA2</name>
    <name type="synonym">PLD2</name>
    <name evidence="7" type="ordered locus">At1g52570</name>
    <name evidence="8" type="ORF">F6D8.21</name>
</gene>
<name>PLDA2_ARATH</name>
<evidence type="ECO:0000250" key="1">
    <source>
        <dbReference type="UniProtKB" id="Q38882"/>
    </source>
</evidence>
<evidence type="ECO:0000255" key="2">
    <source>
        <dbReference type="PROSITE-ProRule" id="PRU00041"/>
    </source>
</evidence>
<evidence type="ECO:0000255" key="3">
    <source>
        <dbReference type="PROSITE-ProRule" id="PRU00153"/>
    </source>
</evidence>
<evidence type="ECO:0000269" key="4">
    <source>
    </source>
</evidence>
<evidence type="ECO:0000303" key="5">
    <source>
    </source>
</evidence>
<evidence type="ECO:0000305" key="6"/>
<evidence type="ECO:0000312" key="7">
    <source>
        <dbReference type="Araport" id="AT1G52570"/>
    </source>
</evidence>
<evidence type="ECO:0000312" key="8">
    <source>
        <dbReference type="EMBL" id="AAD55607.1"/>
    </source>
</evidence>
<comment type="function">
    <text evidence="1">Hydrolyzes glycerol-phospholipids at the terminal phosphodiesteric bond to generate phosphatidic acids (PA). Plays an important role in various cellular processes, including phytohormone action and response to stress, characterized by acidification of the cell.</text>
</comment>
<comment type="catalytic activity">
    <reaction evidence="1">
        <text>a 1,2-diacyl-sn-glycero-3-phosphocholine + H2O = a 1,2-diacyl-sn-glycero-3-phosphate + choline + H(+)</text>
        <dbReference type="Rhea" id="RHEA:14445"/>
        <dbReference type="ChEBI" id="CHEBI:15354"/>
        <dbReference type="ChEBI" id="CHEBI:15377"/>
        <dbReference type="ChEBI" id="CHEBI:15378"/>
        <dbReference type="ChEBI" id="CHEBI:57643"/>
        <dbReference type="ChEBI" id="CHEBI:58608"/>
        <dbReference type="EC" id="3.1.4.4"/>
    </reaction>
</comment>
<comment type="cofactor">
    <cofactor evidence="1">
        <name>Ca(2+)</name>
        <dbReference type="ChEBI" id="CHEBI:29108"/>
    </cofactor>
    <text evidence="1">Ca(2+) requirement for activity depends on pH. Active either under acidic conditions with micromolar levels of calcium (PIP2-dependent) or at neutral pH with millimolar levels of calcium (PIP2-independent).</text>
</comment>
<comment type="subcellular location">
    <subcellularLocation>
        <location evidence="4">Cytoplasm</location>
    </subcellularLocation>
    <subcellularLocation>
        <location evidence="4">Membrane</location>
        <topology evidence="4">Peripheral membrane protein</topology>
    </subcellularLocation>
    <subcellularLocation>
        <location evidence="4">Vacuole</location>
    </subcellularLocation>
    <subcellularLocation>
        <location evidence="4">Cytoplasmic vesicle</location>
        <location evidence="4">Clathrin-coated vesicle</location>
    </subcellularLocation>
    <text>Found in vacuoles and also associated with plasma, microsomal and mitochondrial membranes and in clathrin-coated vesicles. Not found in chloroplast or nuclei. Activation increases association of preexisting enzyme with membranes. The distribution of this conventional PLD between membrane-associated and soluble fractions varied from organ to organ and is calcium-regulated.</text>
</comment>
<comment type="tissue specificity">
    <text evidence="4">Highly expressed in roots, stems and flowers, moderately in leaves, seedlings and siliques. Not detected in dry seeds.</text>
</comment>
<comment type="induction">
    <text>Activated by abscisic acid (ABA), ethylene, heavy metal, cold, salt and osmotic stresses.</text>
</comment>
<comment type="domain">
    <text evidence="6">C2 domain is a calcium-binding fold, and the binding promotes the protein association with membranes. A lower affinity toward calcium can be anticipated for PLD alpha due to the absence of two potential calcium ligands.</text>
</comment>
<comment type="similarity">
    <text evidence="6">Belongs to the phospholipase D family. C2-PLD subfamily.</text>
</comment>